<organism>
    <name type="scientific">Bos taurus</name>
    <name type="common">Bovine</name>
    <dbReference type="NCBI Taxonomy" id="9913"/>
    <lineage>
        <taxon>Eukaryota</taxon>
        <taxon>Metazoa</taxon>
        <taxon>Chordata</taxon>
        <taxon>Craniata</taxon>
        <taxon>Vertebrata</taxon>
        <taxon>Euteleostomi</taxon>
        <taxon>Mammalia</taxon>
        <taxon>Eutheria</taxon>
        <taxon>Laurasiatheria</taxon>
        <taxon>Artiodactyla</taxon>
        <taxon>Ruminantia</taxon>
        <taxon>Pecora</taxon>
        <taxon>Bovidae</taxon>
        <taxon>Bovinae</taxon>
        <taxon>Bos</taxon>
    </lineage>
</organism>
<keyword id="KW-0165">Cleavage on pair of basic residues</keyword>
<keyword id="KW-0177">Collagen degradation</keyword>
<keyword id="KW-0903">Direct protein sequencing</keyword>
<keyword id="KW-1015">Disulfide bond</keyword>
<keyword id="KW-0272">Extracellular matrix</keyword>
<keyword id="KW-0325">Glycoprotein</keyword>
<keyword id="KW-0378">Hydrolase</keyword>
<keyword id="KW-0479">Metal-binding</keyword>
<keyword id="KW-0482">Metalloprotease</keyword>
<keyword id="KW-0645">Protease</keyword>
<keyword id="KW-1185">Reference proteome</keyword>
<keyword id="KW-0677">Repeat</keyword>
<keyword id="KW-0964">Secreted</keyword>
<keyword id="KW-0732">Signal</keyword>
<keyword id="KW-0862">Zinc</keyword>
<keyword id="KW-0865">Zymogen</keyword>
<gene>
    <name type="primary">ADAMTS2</name>
    <name type="synonym">NPI</name>
</gene>
<sequence length="1205" mass="133888">MDPPAGAAGRLLCPALLLLLLLPLPADARLAAAAADPPGGPQGHGAERILAVPVRTDAQGRLVSHVVSAATAPAGVRTRRAAPAQIPGLSGGSEEDPGGRLFYNVTVFGRDLHLRLRPNARLVAPGATVEWQGESGATRVEPLLGTCLYVGDVAGLAESSSVALSNCDGLAGLIRMEEEEFFIEPLEKGLAAKEAEQGRVHVVYHRPTTSRPPPLGGPQALDTGISADSLDSLSRALGVLEERVNSSRRRMRRHAADDDYNIEVLLGVDDSVVQFHGTEHVQKYLLTLMNIVNEIYHDESLGAHINVVLVRIILLSYGKSMSLIEIGNPSQSLENVCRWAYLQQKPDTDHDEYHDHAIFLTRQDFGPSGMQGYAPVTGMCHPVRSCTLNHEDGFSSAFVVAHETGHVLGMEHDGQGNRCGDEVRLGSIMAPLVQAAFHRFHWSRCSQQELSRYLHSYDCLRDDPFTHDWPALPQLPGLHYSMNEQCRFDFGLGYMMCTAFRTFDPCKQLWCSHPDNPYFCKTKKGPPLDGTMCAPGKHCFKGHCIWLTPDILKRDGNWGAWSPFGSCSRTCGTGVKFRTRQCDNPHPANGGRTCSGLAYDFQLCNSQDCPDALADFREEQCRQWDLYFEHGDAQHHWLPHEHRDAKERCHLYCESKETGEVVSMKRMVHDGTRCSYKDAFSLCVRGDCRKVGCDGVIGSSKQEDKCGVCGGDNSHCKVVKGTFSRSPKKLGYIKMFEIPAGARHLLIQEADTTSHHLAVKNLETGKFILNEENDVDPNSKTFIAMGVEWEYRDEDGRETLQTMGPLHGTITVLVIPEGDARISLTYKYMIHEDSLNVDDNNVLEDDSVGYEWALKKWSPCSKPCGGGSQFTKYGCRRRLDHKMVHRGFCDSVSKPKAIRRTCNPQECSQPVWVTGEWEPCSRSCGRTGMQVRSVRCVQPLHNNTTRSVHTKHCNDARPEGRRACNRELCPGRWRAGSWSQCSVTCGNGTQERPVLCRTADDSFGVCREERPETARICRLGPCPRNTSDPSKKSYVVQWLSRPDPNSPVQETSSKGRCQGDKSVFCRMEVLSRYCSIPGYNKLCCKSCNPHDNLTDVDDRAEPPSGKHNDIEELMPTLSVPTLVMEVQPPPGIPLEVPLNTSSTNATEDHPETNAVDVPYKIPGLEDEVQPPNLIPRRPSPYEKTRNQRIQELIDEMRKKEMLGKF</sequence>
<protein>
    <recommendedName>
        <fullName>A disintegrin and metalloproteinase with thrombospondin motifs 2</fullName>
        <shortName>ADAM-TS 2</shortName>
        <shortName>ADAM-TS2</shortName>
        <shortName>ADAMTS-2</shortName>
        <ecNumber>3.4.24.14</ecNumber>
    </recommendedName>
    <alternativeName>
        <fullName>Procollagen I N-proteinase</fullName>
        <shortName>PC I-NP</shortName>
    </alternativeName>
    <alternativeName>
        <fullName>Procollagen I/II amino propeptide-processing enzyme</fullName>
    </alternativeName>
    <alternativeName>
        <fullName>Procollagen N-endopeptidase</fullName>
        <shortName>pNPI</shortName>
    </alternativeName>
</protein>
<accession>P79331</accession>
<dbReference type="EC" id="3.4.24.14"/>
<dbReference type="EMBL" id="X96389">
    <property type="protein sequence ID" value="CAA65253.1"/>
    <property type="molecule type" value="mRNA"/>
</dbReference>
<dbReference type="PIR" id="T18517">
    <property type="entry name" value="T18517"/>
</dbReference>
<dbReference type="RefSeq" id="NP_777056.1">
    <property type="nucleotide sequence ID" value="NM_174631.2"/>
</dbReference>
<dbReference type="SMR" id="P79331"/>
<dbReference type="FunCoup" id="P79331">
    <property type="interactions" value="64"/>
</dbReference>
<dbReference type="STRING" id="9913.ENSBTAP00000019526"/>
<dbReference type="MEROPS" id="M12.301"/>
<dbReference type="GlyCosmos" id="P79331">
    <property type="glycosylation" value="9 sites, No reported glycans"/>
</dbReference>
<dbReference type="GlyGen" id="P79331">
    <property type="glycosylation" value="9 sites"/>
</dbReference>
<dbReference type="PaxDb" id="9913-ENSBTAP00000019526"/>
<dbReference type="GeneID" id="282401"/>
<dbReference type="KEGG" id="bta:282401"/>
<dbReference type="CTD" id="9509"/>
<dbReference type="VEuPathDB" id="HostDB:ENSBTAG00000014665"/>
<dbReference type="eggNOG" id="KOG3538">
    <property type="taxonomic scope" value="Eukaryota"/>
</dbReference>
<dbReference type="HOGENOM" id="CLU_000660_4_1_1"/>
<dbReference type="InParanoid" id="P79331"/>
<dbReference type="OMA" id="QCQGDKS"/>
<dbReference type="OrthoDB" id="5855429at2759"/>
<dbReference type="TreeFam" id="TF313537"/>
<dbReference type="BRENDA" id="3.4.24.14">
    <property type="organism ID" value="908"/>
</dbReference>
<dbReference type="Reactome" id="R-BTA-1650814">
    <property type="pathway name" value="Collagen biosynthesis and modifying enzymes"/>
</dbReference>
<dbReference type="Reactome" id="R-BTA-5173214">
    <property type="pathway name" value="O-glycosylation of TSR domain-containing proteins"/>
</dbReference>
<dbReference type="Proteomes" id="UP000009136">
    <property type="component" value="Chromosome 7"/>
</dbReference>
<dbReference type="Bgee" id="ENSBTAG00000014665">
    <property type="expression patterns" value="Expressed in fornix of vagina and 104 other cell types or tissues"/>
</dbReference>
<dbReference type="GO" id="GO:0031012">
    <property type="term" value="C:extracellular matrix"/>
    <property type="evidence" value="ECO:0000318"/>
    <property type="project" value="GO_Central"/>
</dbReference>
<dbReference type="GO" id="GO:0005576">
    <property type="term" value="C:extracellular region"/>
    <property type="evidence" value="ECO:0007669"/>
    <property type="project" value="UniProtKB-KW"/>
</dbReference>
<dbReference type="GO" id="GO:0004222">
    <property type="term" value="F:metalloendopeptidase activity"/>
    <property type="evidence" value="ECO:0000318"/>
    <property type="project" value="GO_Central"/>
</dbReference>
<dbReference type="GO" id="GO:0008270">
    <property type="term" value="F:zinc ion binding"/>
    <property type="evidence" value="ECO:0007669"/>
    <property type="project" value="InterPro"/>
</dbReference>
<dbReference type="GO" id="GO:0032964">
    <property type="term" value="P:collagen biosynthetic process"/>
    <property type="evidence" value="ECO:0000314"/>
    <property type="project" value="BHF-UCL"/>
</dbReference>
<dbReference type="GO" id="GO:0030574">
    <property type="term" value="P:collagen catabolic process"/>
    <property type="evidence" value="ECO:0007669"/>
    <property type="project" value="UniProtKB-KW"/>
</dbReference>
<dbReference type="GO" id="GO:0030199">
    <property type="term" value="P:collagen fibril organization"/>
    <property type="evidence" value="ECO:0000305"/>
    <property type="project" value="BHF-UCL"/>
</dbReference>
<dbReference type="GO" id="GO:0030198">
    <property type="term" value="P:extracellular matrix organization"/>
    <property type="evidence" value="ECO:0000318"/>
    <property type="project" value="GO_Central"/>
</dbReference>
<dbReference type="GO" id="GO:0016485">
    <property type="term" value="P:protein processing"/>
    <property type="evidence" value="ECO:0000314"/>
    <property type="project" value="BHF-UCL"/>
</dbReference>
<dbReference type="GO" id="GO:0006508">
    <property type="term" value="P:proteolysis"/>
    <property type="evidence" value="ECO:0000318"/>
    <property type="project" value="GO_Central"/>
</dbReference>
<dbReference type="GO" id="GO:0097435">
    <property type="term" value="P:supramolecular fiber organization"/>
    <property type="evidence" value="ECO:0000305"/>
    <property type="project" value="BHF-UCL"/>
</dbReference>
<dbReference type="CDD" id="cd04273">
    <property type="entry name" value="ZnMc_ADAMTS_like"/>
    <property type="match status" value="1"/>
</dbReference>
<dbReference type="FunFam" id="2.20.100.10:FF:000006">
    <property type="entry name" value="A disintegrin and metalloproteinase with thrombospondin motifs 1"/>
    <property type="match status" value="1"/>
</dbReference>
<dbReference type="FunFam" id="2.60.120.830:FF:000001">
    <property type="entry name" value="A disintegrin and metalloproteinase with thrombospondin motifs 1"/>
    <property type="match status" value="1"/>
</dbReference>
<dbReference type="FunFam" id="2.20.100.10:FF:000011">
    <property type="entry name" value="A disintegrin and metalloproteinase with thrombospondin motifs 3"/>
    <property type="match status" value="1"/>
</dbReference>
<dbReference type="FunFam" id="2.20.100.10:FF:000030">
    <property type="entry name" value="A disintegrin and metalloproteinase with thrombospondin motifs 3"/>
    <property type="match status" value="1"/>
</dbReference>
<dbReference type="FunFam" id="3.40.1620.60:FF:000001">
    <property type="entry name" value="A disintegrin and metalloproteinase with thrombospondin motifs 3"/>
    <property type="match status" value="1"/>
</dbReference>
<dbReference type="FunFam" id="3.40.390.10:FF:000008">
    <property type="entry name" value="A disintegrin and metalloproteinase with thrombospondin motifs 3"/>
    <property type="match status" value="1"/>
</dbReference>
<dbReference type="Gene3D" id="2.60.120.830">
    <property type="match status" value="1"/>
</dbReference>
<dbReference type="Gene3D" id="3.40.1620.60">
    <property type="match status" value="1"/>
</dbReference>
<dbReference type="Gene3D" id="3.40.390.10">
    <property type="entry name" value="Collagenase (Catalytic Domain)"/>
    <property type="match status" value="1"/>
</dbReference>
<dbReference type="Gene3D" id="2.20.100.10">
    <property type="entry name" value="Thrombospondin type-1 (TSP1) repeat"/>
    <property type="match status" value="4"/>
</dbReference>
<dbReference type="InterPro" id="IPR013273">
    <property type="entry name" value="ADAMTS/ADAMTS-like"/>
</dbReference>
<dbReference type="InterPro" id="IPR050439">
    <property type="entry name" value="ADAMTS_ADAMTS-like"/>
</dbReference>
<dbReference type="InterPro" id="IPR041645">
    <property type="entry name" value="ADAMTS_CR_2"/>
</dbReference>
<dbReference type="InterPro" id="IPR045371">
    <property type="entry name" value="ADAMTS_CR_3"/>
</dbReference>
<dbReference type="InterPro" id="IPR010294">
    <property type="entry name" value="ADAMTS_spacer1"/>
</dbReference>
<dbReference type="InterPro" id="IPR024079">
    <property type="entry name" value="MetalloPept_cat_dom_sf"/>
</dbReference>
<dbReference type="InterPro" id="IPR013275">
    <property type="entry name" value="Pept_M12B_ADAM-TS2"/>
</dbReference>
<dbReference type="InterPro" id="IPR001590">
    <property type="entry name" value="Peptidase_M12B"/>
</dbReference>
<dbReference type="InterPro" id="IPR002870">
    <property type="entry name" value="Peptidase_M12B_N"/>
</dbReference>
<dbReference type="InterPro" id="IPR010909">
    <property type="entry name" value="PLAC"/>
</dbReference>
<dbReference type="InterPro" id="IPR000884">
    <property type="entry name" value="TSP1_rpt"/>
</dbReference>
<dbReference type="InterPro" id="IPR036383">
    <property type="entry name" value="TSP1_rpt_sf"/>
</dbReference>
<dbReference type="PANTHER" id="PTHR13723:SF141">
    <property type="entry name" value="A DISINTEGRIN AND METALLOPROTEINASE WITH THROMBOSPONDIN MOTIFS 2"/>
    <property type="match status" value="1"/>
</dbReference>
<dbReference type="PANTHER" id="PTHR13723">
    <property type="entry name" value="ADAMTS A DISINTEGRIN AND METALLOPROTEASE WITH THROMBOSPONDIN MOTIFS PROTEASE"/>
    <property type="match status" value="1"/>
</dbReference>
<dbReference type="Pfam" id="PF17771">
    <property type="entry name" value="ADAMTS_CR_2"/>
    <property type="match status" value="1"/>
</dbReference>
<dbReference type="Pfam" id="PF19236">
    <property type="entry name" value="ADAMTS_CR_3"/>
    <property type="match status" value="1"/>
</dbReference>
<dbReference type="Pfam" id="PF05986">
    <property type="entry name" value="ADAMTS_spacer1"/>
    <property type="match status" value="1"/>
</dbReference>
<dbReference type="Pfam" id="PF01562">
    <property type="entry name" value="Pep_M12B_propep"/>
    <property type="match status" value="1"/>
</dbReference>
<dbReference type="Pfam" id="PF01421">
    <property type="entry name" value="Reprolysin"/>
    <property type="match status" value="1"/>
</dbReference>
<dbReference type="Pfam" id="PF19030">
    <property type="entry name" value="TSP1_ADAMTS"/>
    <property type="match status" value="3"/>
</dbReference>
<dbReference type="Pfam" id="PF00090">
    <property type="entry name" value="TSP_1"/>
    <property type="match status" value="1"/>
</dbReference>
<dbReference type="PRINTS" id="PR01859">
    <property type="entry name" value="ADAMTS2"/>
</dbReference>
<dbReference type="PRINTS" id="PR01857">
    <property type="entry name" value="ADAMTSFAMILY"/>
</dbReference>
<dbReference type="SMART" id="SM00209">
    <property type="entry name" value="TSP1"/>
    <property type="match status" value="4"/>
</dbReference>
<dbReference type="SUPFAM" id="SSF55486">
    <property type="entry name" value="Metalloproteases ('zincins'), catalytic domain"/>
    <property type="match status" value="1"/>
</dbReference>
<dbReference type="SUPFAM" id="SSF82895">
    <property type="entry name" value="TSP-1 type 1 repeat"/>
    <property type="match status" value="4"/>
</dbReference>
<dbReference type="PROSITE" id="PS50215">
    <property type="entry name" value="ADAM_MEPRO"/>
    <property type="match status" value="1"/>
</dbReference>
<dbReference type="PROSITE" id="PS50900">
    <property type="entry name" value="PLAC"/>
    <property type="match status" value="1"/>
</dbReference>
<dbReference type="PROSITE" id="PS50092">
    <property type="entry name" value="TSP1"/>
    <property type="match status" value="4"/>
</dbReference>
<name>ATS2_BOVIN</name>
<comment type="function">
    <text evidence="2 8">Cleaves the propeptides of type I and II collagen prior to fibril assembly (PubMed:7622483). Does not act on type III collagen (PubMed:7622483). Cleaves lysyl oxidase LOX at a site downstream of its propeptide cleavage site to produce a short LOX form with reduced collagen-binding activity (By similarity).</text>
</comment>
<comment type="catalytic activity">
    <reaction>
        <text>Cleaves the N-propeptide of collagen chain alpha1(I) at Pro-|-Gln and of alpha1(II) and alpha2(I) at Ala-|-Gln.</text>
        <dbReference type="EC" id="3.4.24.14"/>
    </reaction>
</comment>
<comment type="cofactor">
    <cofactor evidence="1">
        <name>Zn(2+)</name>
        <dbReference type="ChEBI" id="CHEBI:29105"/>
    </cofactor>
    <text evidence="1">Binds 1 zinc ion per subunit.</text>
</comment>
<comment type="subunit">
    <text>May belong to a multimeric complex. Binds specifically to collagen type XIV.</text>
</comment>
<comment type="subcellular location">
    <subcellularLocation>
        <location evidence="1">Secreted</location>
        <location evidence="1">Extracellular space</location>
        <location evidence="1">Extracellular matrix</location>
    </subcellularLocation>
</comment>
<comment type="tissue specificity">
    <text>Enzymatic activity is detected at high level in all type I collagen-rich tissues such as skin, bones, tendons and aorta and at low level in brain and thymus. The mRNA levels were disproportionately high in heart, liver, retina and muscle.</text>
</comment>
<comment type="domain">
    <text>The spacer domain and the TSP type-1 domains are important for a tight interaction with the extracellular matrix.</text>
</comment>
<comment type="PTM">
    <text>The N-terminus is blocked.</text>
</comment>
<comment type="PTM">
    <text evidence="1">The precursor is cleaved by a furin endopeptidase.</text>
</comment>
<comment type="PTM">
    <text evidence="1">Glycosylated. Can be O-fucosylated by POFUT2 on a serine or a threonine residue found within the consensus sequence C1-X(2)-(S/T)-C2-G of the TSP type-1 repeat domains where C1 and C2 are the first and second cysteine residue of the repeat, respectively. Fucosylated repeats can then be further glycosylated by the addition of a beta-1,3-glucose residue by the glucosyltransferase, B3GALTL. Fucosylation mediates the efficient secretion of ADAMTS family members. Can also be C-glycosylated with one or two mannose molecules on tryptophan residues within the consensus sequence W-X-X-W of the TPRs, and N-glycosylated. These other glycosylations can also facilitate secretion (By similarity).</text>
</comment>
<comment type="disease">
    <text evidence="10">Defects in ADAMTS2 are the cause of dermatosparaxis, a recessively inherited disorder characterized by severe skin fragility and biochemically by the presence in skin of procollagen incompletely processed at the N-terminus.</text>
</comment>
<comment type="caution">
    <text evidence="9">Has sometimes been referred to as ADAMTS3.</text>
</comment>
<proteinExistence type="evidence at protein level"/>
<evidence type="ECO:0000250" key="1"/>
<evidence type="ECO:0000250" key="2">
    <source>
        <dbReference type="UniProtKB" id="O95450"/>
    </source>
</evidence>
<evidence type="ECO:0000255" key="3"/>
<evidence type="ECO:0000255" key="4">
    <source>
        <dbReference type="PROSITE-ProRule" id="PRU00210"/>
    </source>
</evidence>
<evidence type="ECO:0000255" key="5">
    <source>
        <dbReference type="PROSITE-ProRule" id="PRU00233"/>
    </source>
</evidence>
<evidence type="ECO:0000255" key="6">
    <source>
        <dbReference type="PROSITE-ProRule" id="PRU00276"/>
    </source>
</evidence>
<evidence type="ECO:0000256" key="7">
    <source>
        <dbReference type="SAM" id="MobiDB-lite"/>
    </source>
</evidence>
<evidence type="ECO:0000269" key="8">
    <source>
    </source>
</evidence>
<evidence type="ECO:0000305" key="9"/>
<evidence type="ECO:0000305" key="10">
    <source>
    </source>
</evidence>
<feature type="signal peptide" evidence="3">
    <location>
        <begin position="1"/>
        <end position="28"/>
    </location>
</feature>
<feature type="propeptide" id="PRO_0000029156" evidence="1">
    <location>
        <begin position="29"/>
        <end position="253"/>
    </location>
</feature>
<feature type="chain" id="PRO_0000029157" description="A disintegrin and metalloproteinase with thrombospondin motifs 2">
    <location>
        <begin position="254"/>
        <end position="1205"/>
    </location>
</feature>
<feature type="domain" description="Peptidase M12B" evidence="6">
    <location>
        <begin position="260"/>
        <end position="464"/>
    </location>
</feature>
<feature type="domain" description="Disintegrin">
    <location>
        <begin position="474"/>
        <end position="554"/>
    </location>
</feature>
<feature type="domain" description="TSP type-1 1" evidence="4">
    <location>
        <begin position="555"/>
        <end position="610"/>
    </location>
</feature>
<feature type="domain" description="TSP type-1 2" evidence="4">
    <location>
        <begin position="848"/>
        <end position="906"/>
    </location>
</feature>
<feature type="domain" description="TSP type-1 3" evidence="4">
    <location>
        <begin position="908"/>
        <end position="968"/>
    </location>
</feature>
<feature type="domain" description="TSP type-1 4" evidence="4">
    <location>
        <begin position="969"/>
        <end position="1023"/>
    </location>
</feature>
<feature type="domain" description="PLAC" evidence="5">
    <location>
        <begin position="1053"/>
        <end position="1091"/>
    </location>
</feature>
<feature type="region of interest" description="Spacer">
    <location>
        <begin position="717"/>
        <end position="845"/>
    </location>
</feature>
<feature type="region of interest" description="Disordered" evidence="7">
    <location>
        <begin position="1163"/>
        <end position="1184"/>
    </location>
</feature>
<feature type="short sequence motif" description="Cell attachment site" evidence="3">
    <location>
        <begin position="685"/>
        <end position="687"/>
    </location>
</feature>
<feature type="active site" evidence="6">
    <location>
        <position position="403"/>
    </location>
</feature>
<feature type="binding site" evidence="6">
    <location>
        <position position="402"/>
    </location>
    <ligand>
        <name>Zn(2+)</name>
        <dbReference type="ChEBI" id="CHEBI:29105"/>
        <note>catalytic</note>
    </ligand>
</feature>
<feature type="binding site" evidence="6">
    <location>
        <position position="406"/>
    </location>
    <ligand>
        <name>Zn(2+)</name>
        <dbReference type="ChEBI" id="CHEBI:29105"/>
        <note>catalytic</note>
    </ligand>
</feature>
<feature type="binding site" evidence="6">
    <location>
        <position position="412"/>
    </location>
    <ligand>
        <name>Zn(2+)</name>
        <dbReference type="ChEBI" id="CHEBI:29105"/>
        <note>catalytic</note>
    </ligand>
</feature>
<feature type="glycosylation site" description="N-linked (GlcNAc...) asparagine" evidence="3">
    <location>
        <position position="104"/>
    </location>
</feature>
<feature type="glycosylation site" description="N-linked (GlcNAc...) asparagine" evidence="3">
    <location>
        <position position="245"/>
    </location>
</feature>
<feature type="glycosylation site" description="N-linked (GlcNAc...) asparagine" evidence="3">
    <location>
        <position position="942"/>
    </location>
</feature>
<feature type="glycosylation site" description="N-linked (GlcNAc...) asparagine" evidence="3">
    <location>
        <position position="943"/>
    </location>
</feature>
<feature type="glycosylation site" description="N-linked (GlcNAc...) asparagine" evidence="3">
    <location>
        <position position="987"/>
    </location>
</feature>
<feature type="glycosylation site" description="N-linked (GlcNAc...) asparagine" evidence="3">
    <location>
        <position position="1025"/>
    </location>
</feature>
<feature type="glycosylation site" description="N-linked (GlcNAc...) asparagine" evidence="3">
    <location>
        <position position="1092"/>
    </location>
</feature>
<feature type="glycosylation site" description="N-linked (GlcNAc...) asparagine" evidence="3">
    <location>
        <position position="1139"/>
    </location>
</feature>
<feature type="glycosylation site" description="N-linked (GlcNAc...) asparagine" evidence="3">
    <location>
        <position position="1144"/>
    </location>
</feature>
<feature type="disulfide bond" evidence="1">
    <location>
        <begin position="337"/>
        <end position="386"/>
    </location>
</feature>
<feature type="disulfide bond" evidence="1">
    <location>
        <begin position="380"/>
        <end position="459"/>
    </location>
</feature>
<feature type="disulfide bond" evidence="1">
    <location>
        <begin position="419"/>
        <end position="445"/>
    </location>
</feature>
<feature type="disulfide bond" evidence="1">
    <location>
        <begin position="486"/>
        <end position="511"/>
    </location>
</feature>
<feature type="disulfide bond" evidence="1">
    <location>
        <begin position="497"/>
        <end position="520"/>
    </location>
</feature>
<feature type="disulfide bond" evidence="1">
    <location>
        <begin position="506"/>
        <end position="539"/>
    </location>
</feature>
<feature type="disulfide bond" evidence="1">
    <location>
        <begin position="533"/>
        <end position="544"/>
    </location>
</feature>
<feature type="disulfide bond" evidence="1">
    <location>
        <begin position="567"/>
        <end position="604"/>
    </location>
</feature>
<feature type="disulfide bond" evidence="1">
    <location>
        <begin position="571"/>
        <end position="609"/>
    </location>
</feature>
<feature type="disulfide bond" evidence="1">
    <location>
        <begin position="582"/>
        <end position="594"/>
    </location>
</feature>
<feature type="disulfide bond" evidence="1">
    <location>
        <begin position="981"/>
        <end position="1017"/>
    </location>
</feature>
<feature type="disulfide bond" evidence="1">
    <location>
        <begin position="985"/>
        <end position="1022"/>
    </location>
</feature>
<feature type="disulfide bond" evidence="1">
    <location>
        <begin position="996"/>
        <end position="1006"/>
    </location>
</feature>
<reference key="1">
    <citation type="journal article" date="1997" name="Proc. Natl. Acad. Sci. U.S.A.">
        <title>cDNA cloning and expression of bovine procollagen I N-proteinase: a new member of the superfamily of zinc-metalloproteinases with binding sites for cells and other matrix components.</title>
        <authorList>
            <person name="Colige A."/>
            <person name="Li S.W."/>
            <person name="Sieron A.L."/>
            <person name="Nusgens B.V."/>
            <person name="Prockop D.J."/>
            <person name="Lapiere C.M."/>
        </authorList>
    </citation>
    <scope>NUCLEOTIDE SEQUENCE [MRNA]</scope>
    <source>
        <tissue>Skin</tissue>
    </source>
</reference>
<reference key="2">
    <citation type="journal article" date="1995" name="J. Biol. Chem.">
        <title>Characterization and partial amino acid sequencing of a 107-kDa procollagen I N-proteinase purified by affinity chromatography on immobilized type XIV collagen.</title>
        <authorList>
            <person name="Colige A."/>
            <person name="Beschin A."/>
            <person name="Samyn B."/>
            <person name="Goebels Y."/>
            <person name="Van Beeumen J."/>
            <person name="Nusgens B.V."/>
            <person name="Lapiere C.M."/>
        </authorList>
    </citation>
    <scope>PARTIAL PROTEIN SEQUENCE</scope>
    <scope>FUNCTION</scope>
</reference>